<accession>P63664</accession>
<accession>Q99SF6</accession>
<reference key="1">
    <citation type="journal article" date="2001" name="Lancet">
        <title>Whole genome sequencing of meticillin-resistant Staphylococcus aureus.</title>
        <authorList>
            <person name="Kuroda M."/>
            <person name="Ohta T."/>
            <person name="Uchiyama I."/>
            <person name="Baba T."/>
            <person name="Yuzawa H."/>
            <person name="Kobayashi I."/>
            <person name="Cui L."/>
            <person name="Oguchi A."/>
            <person name="Aoki K."/>
            <person name="Nagai Y."/>
            <person name="Lian J.-Q."/>
            <person name="Ito T."/>
            <person name="Kanamori M."/>
            <person name="Matsumaru H."/>
            <person name="Maruyama A."/>
            <person name="Murakami H."/>
            <person name="Hosoyama A."/>
            <person name="Mizutani-Ui Y."/>
            <person name="Takahashi N.K."/>
            <person name="Sawano T."/>
            <person name="Inoue R."/>
            <person name="Kaito C."/>
            <person name="Sekimizu K."/>
            <person name="Hirakawa H."/>
            <person name="Kuhara S."/>
            <person name="Goto S."/>
            <person name="Yabuzaki J."/>
            <person name="Kanehisa M."/>
            <person name="Yamashita A."/>
            <person name="Oshima K."/>
            <person name="Furuya K."/>
            <person name="Yoshino C."/>
            <person name="Shiba T."/>
            <person name="Hattori M."/>
            <person name="Ogasawara N."/>
            <person name="Hayashi H."/>
            <person name="Hiramatsu K."/>
        </authorList>
    </citation>
    <scope>NUCLEOTIDE SEQUENCE [LARGE SCALE GENOMIC DNA]</scope>
    <source>
        <strain>Mu50 / ATCC 700699</strain>
    </source>
</reference>
<name>ATPE_STAAM</name>
<proteinExistence type="inferred from homology"/>
<comment type="function">
    <text evidence="1">Produces ATP from ADP in the presence of a proton gradient across the membrane.</text>
</comment>
<comment type="subunit">
    <text>F-type ATPases have 2 components, CF(1) - the catalytic core - and CF(0) - the membrane proton channel. CF(1) has five subunits: alpha(3), beta(3), gamma(1), delta(1), epsilon(1). CF(0) has three main subunits: a, b and c.</text>
</comment>
<comment type="subcellular location">
    <subcellularLocation>
        <location evidence="1">Cell membrane</location>
        <topology evidence="1">Peripheral membrane protein</topology>
    </subcellularLocation>
</comment>
<comment type="similarity">
    <text evidence="1">Belongs to the ATPase epsilon chain family.</text>
</comment>
<evidence type="ECO:0000255" key="1">
    <source>
        <dbReference type="HAMAP-Rule" id="MF_00530"/>
    </source>
</evidence>
<sequence length="134" mass="14844">MNTLNLDIVTPNGSVYNRDNVELVVMQTTAGEIGVMSGHIPTVAALKTGFVKVKFHDGTEYIAVSDGFVEVRKDKVSIIVQTAETAREIDVERAKLAKARAESHLENDDDNTDIHRAERALERANNRLRVAELK</sequence>
<keyword id="KW-0066">ATP synthesis</keyword>
<keyword id="KW-1003">Cell membrane</keyword>
<keyword id="KW-0139">CF(1)</keyword>
<keyword id="KW-0375">Hydrogen ion transport</keyword>
<keyword id="KW-0406">Ion transport</keyword>
<keyword id="KW-0472">Membrane</keyword>
<keyword id="KW-0813">Transport</keyword>
<organism>
    <name type="scientific">Staphylococcus aureus (strain Mu50 / ATCC 700699)</name>
    <dbReference type="NCBI Taxonomy" id="158878"/>
    <lineage>
        <taxon>Bacteria</taxon>
        <taxon>Bacillati</taxon>
        <taxon>Bacillota</taxon>
        <taxon>Bacilli</taxon>
        <taxon>Bacillales</taxon>
        <taxon>Staphylococcaceae</taxon>
        <taxon>Staphylococcus</taxon>
    </lineage>
</organism>
<dbReference type="EMBL" id="BA000017">
    <property type="protein sequence ID" value="BAB58264.1"/>
    <property type="molecule type" value="Genomic_DNA"/>
</dbReference>
<dbReference type="RefSeq" id="WP_001094394.1">
    <property type="nucleotide sequence ID" value="NC_002758.2"/>
</dbReference>
<dbReference type="SMR" id="P63664"/>
<dbReference type="KEGG" id="sav:SAV2102"/>
<dbReference type="HOGENOM" id="CLU_084338_1_3_9"/>
<dbReference type="PhylomeDB" id="P63664"/>
<dbReference type="Proteomes" id="UP000002481">
    <property type="component" value="Chromosome"/>
</dbReference>
<dbReference type="GO" id="GO:0005886">
    <property type="term" value="C:plasma membrane"/>
    <property type="evidence" value="ECO:0007669"/>
    <property type="project" value="UniProtKB-SubCell"/>
</dbReference>
<dbReference type="GO" id="GO:0045259">
    <property type="term" value="C:proton-transporting ATP synthase complex"/>
    <property type="evidence" value="ECO:0007669"/>
    <property type="project" value="UniProtKB-KW"/>
</dbReference>
<dbReference type="GO" id="GO:0005524">
    <property type="term" value="F:ATP binding"/>
    <property type="evidence" value="ECO:0007669"/>
    <property type="project" value="UniProtKB-UniRule"/>
</dbReference>
<dbReference type="GO" id="GO:0046933">
    <property type="term" value="F:proton-transporting ATP synthase activity, rotational mechanism"/>
    <property type="evidence" value="ECO:0007669"/>
    <property type="project" value="UniProtKB-UniRule"/>
</dbReference>
<dbReference type="CDD" id="cd12152">
    <property type="entry name" value="F1-ATPase_delta"/>
    <property type="match status" value="1"/>
</dbReference>
<dbReference type="FunFam" id="1.20.5.440:FF:000001">
    <property type="entry name" value="ATP synthase epsilon chain"/>
    <property type="match status" value="1"/>
</dbReference>
<dbReference type="FunFam" id="2.60.15.10:FF:000001">
    <property type="entry name" value="ATP synthase epsilon chain"/>
    <property type="match status" value="1"/>
</dbReference>
<dbReference type="Gene3D" id="1.20.5.440">
    <property type="entry name" value="ATP synthase delta/epsilon subunit, C-terminal domain"/>
    <property type="match status" value="1"/>
</dbReference>
<dbReference type="Gene3D" id="2.60.15.10">
    <property type="entry name" value="F0F1 ATP synthase delta/epsilon subunit, N-terminal"/>
    <property type="match status" value="1"/>
</dbReference>
<dbReference type="HAMAP" id="MF_00530">
    <property type="entry name" value="ATP_synth_epsil_bac"/>
    <property type="match status" value="1"/>
</dbReference>
<dbReference type="InterPro" id="IPR036794">
    <property type="entry name" value="ATP_F1_dsu/esu_C_sf"/>
</dbReference>
<dbReference type="InterPro" id="IPR001469">
    <property type="entry name" value="ATP_synth_F1_dsu/esu"/>
</dbReference>
<dbReference type="InterPro" id="IPR020546">
    <property type="entry name" value="ATP_synth_F1_dsu/esu_N"/>
</dbReference>
<dbReference type="InterPro" id="IPR020547">
    <property type="entry name" value="ATP_synth_F1_esu_C"/>
</dbReference>
<dbReference type="InterPro" id="IPR036771">
    <property type="entry name" value="ATPsynth_dsu/esu_N"/>
</dbReference>
<dbReference type="NCBIfam" id="TIGR01216">
    <property type="entry name" value="ATP_synt_epsi"/>
    <property type="match status" value="1"/>
</dbReference>
<dbReference type="NCBIfam" id="NF001846">
    <property type="entry name" value="PRK00571.1-3"/>
    <property type="match status" value="1"/>
</dbReference>
<dbReference type="NCBIfam" id="NF009980">
    <property type="entry name" value="PRK13446.1"/>
    <property type="match status" value="1"/>
</dbReference>
<dbReference type="PANTHER" id="PTHR13822">
    <property type="entry name" value="ATP SYNTHASE DELTA/EPSILON CHAIN"/>
    <property type="match status" value="1"/>
</dbReference>
<dbReference type="PANTHER" id="PTHR13822:SF10">
    <property type="entry name" value="ATP SYNTHASE EPSILON CHAIN, CHLOROPLASTIC"/>
    <property type="match status" value="1"/>
</dbReference>
<dbReference type="Pfam" id="PF00401">
    <property type="entry name" value="ATP-synt_DE"/>
    <property type="match status" value="1"/>
</dbReference>
<dbReference type="Pfam" id="PF02823">
    <property type="entry name" value="ATP-synt_DE_N"/>
    <property type="match status" value="1"/>
</dbReference>
<dbReference type="SUPFAM" id="SSF46604">
    <property type="entry name" value="Epsilon subunit of F1F0-ATP synthase C-terminal domain"/>
    <property type="match status" value="1"/>
</dbReference>
<dbReference type="SUPFAM" id="SSF51344">
    <property type="entry name" value="Epsilon subunit of F1F0-ATP synthase N-terminal domain"/>
    <property type="match status" value="1"/>
</dbReference>
<gene>
    <name evidence="1" type="primary">atpC</name>
    <name type="ordered locus">SAV2102</name>
</gene>
<protein>
    <recommendedName>
        <fullName evidence="1">ATP synthase epsilon chain</fullName>
    </recommendedName>
    <alternativeName>
        <fullName evidence="1">ATP synthase F1 sector epsilon subunit</fullName>
    </alternativeName>
    <alternativeName>
        <fullName evidence="1">F-ATPase epsilon subunit</fullName>
    </alternativeName>
</protein>
<feature type="chain" id="PRO_0000188201" description="ATP synthase epsilon chain">
    <location>
        <begin position="1"/>
        <end position="134"/>
    </location>
</feature>